<reference key="1">
    <citation type="journal article" date="1986" name="FEBS Lett.">
        <title>[Ser7]neurotensin: isolation from guinea pig intestine.</title>
        <authorList>
            <person name="Shaw C."/>
            <person name="Thim L."/>
            <person name="Conlon J.M."/>
        </authorList>
    </citation>
    <scope>PROTEIN SEQUENCE</scope>
    <scope>PYROGLUTAMATE FORMATION AT GLN-1</scope>
    <source>
        <tissue>Small intestine</tissue>
    </source>
</reference>
<organism>
    <name type="scientific">Cavia porcellus</name>
    <name type="common">Guinea pig</name>
    <dbReference type="NCBI Taxonomy" id="10141"/>
    <lineage>
        <taxon>Eukaryota</taxon>
        <taxon>Metazoa</taxon>
        <taxon>Chordata</taxon>
        <taxon>Craniata</taxon>
        <taxon>Vertebrata</taxon>
        <taxon>Euteleostomi</taxon>
        <taxon>Mammalia</taxon>
        <taxon>Eutheria</taxon>
        <taxon>Euarchontoglires</taxon>
        <taxon>Glires</taxon>
        <taxon>Rodentia</taxon>
        <taxon>Hystricomorpha</taxon>
        <taxon>Caviidae</taxon>
        <taxon>Cavia</taxon>
    </lineage>
</organism>
<evidence type="ECO:0000250" key="1">
    <source>
        <dbReference type="UniProtKB" id="P30990"/>
    </source>
</evidence>
<evidence type="ECO:0000269" key="2">
    <source>
    </source>
</evidence>
<evidence type="ECO:0000305" key="3"/>
<accession>P32560</accession>
<dbReference type="PIR" id="A53608">
    <property type="entry name" value="A53608"/>
</dbReference>
<dbReference type="BindingDB" id="P32560"/>
<dbReference type="InParanoid" id="P32560"/>
<dbReference type="Proteomes" id="UP000005447">
    <property type="component" value="Unassembled WGS sequence"/>
</dbReference>
<dbReference type="GO" id="GO:0005576">
    <property type="term" value="C:extracellular region"/>
    <property type="evidence" value="ECO:0007669"/>
    <property type="project" value="UniProtKB-SubCell"/>
</dbReference>
<dbReference type="GO" id="GO:0097746">
    <property type="term" value="P:blood vessel diameter maintenance"/>
    <property type="evidence" value="ECO:0007669"/>
    <property type="project" value="UniProtKB-KW"/>
</dbReference>
<sequence length="13" mass="1680">QLYENKSRRPYIL</sequence>
<proteinExistence type="evidence at protein level"/>
<keyword id="KW-0903">Direct protein sequencing</keyword>
<keyword id="KW-0873">Pyrrolidone carboxylic acid</keyword>
<keyword id="KW-1185">Reference proteome</keyword>
<keyword id="KW-0964">Secreted</keyword>
<keyword id="KW-0838">Vasoactive</keyword>
<comment type="function">
    <text>Smooth muscle-contracting peptide.</text>
</comment>
<comment type="subunit">
    <text evidence="1">Interacts with NTSR1. Interacts with SORT1. Interacts with SORL1.</text>
</comment>
<comment type="subcellular location">
    <subcellularLocation>
        <location>Secreted</location>
    </subcellularLocation>
</comment>
<comment type="PTM">
    <molecule>Neurotensin</molecule>
    <text evidence="1">Neurotensin is cleaved and degraded by Angiotensin-converting enzyme (ACE) and neprilysin (MME).</text>
</comment>
<comment type="similarity">
    <text evidence="3">Belongs to the neurotensin family.</text>
</comment>
<gene>
    <name type="primary">NTS</name>
</gene>
<protein>
    <recommendedName>
        <fullName>Neurotensin</fullName>
        <shortName>NT</shortName>
    </recommendedName>
</protein>
<feature type="peptide" id="PRO_0000044067" description="Neurotensin">
    <location>
        <begin position="1"/>
        <end position="13"/>
    </location>
</feature>
<feature type="site" description="Cleavage; by MME" evidence="1">
    <location>
        <begin position="10"/>
        <end position="11"/>
    </location>
</feature>
<feature type="site" description="Cleavage; by ACE and MME" evidence="1">
    <location>
        <begin position="11"/>
        <end position="12"/>
    </location>
</feature>
<feature type="modified residue" description="Pyrrolidone carboxylic acid" evidence="2">
    <location>
        <position position="1"/>
    </location>
</feature>
<name>NEUT_CAVPO</name>